<keyword id="KW-0030">Aminoacyl-tRNA synthetase</keyword>
<keyword id="KW-0067">ATP-binding</keyword>
<keyword id="KW-0963">Cytoplasm</keyword>
<keyword id="KW-0436">Ligase</keyword>
<keyword id="KW-0547">Nucleotide-binding</keyword>
<keyword id="KW-0648">Protein biosynthesis</keyword>
<keyword id="KW-1185">Reference proteome</keyword>
<protein>
    <recommendedName>
        <fullName evidence="1">Glutamate--tRNA ligase</fullName>
        <ecNumber evidence="1">6.1.1.17</ecNumber>
    </recommendedName>
    <alternativeName>
        <fullName evidence="1">Glutamyl-tRNA synthetase</fullName>
        <shortName evidence="1">GluRS</shortName>
    </alternativeName>
</protein>
<sequence>MTVKTRFAPSPTGYLHIGGVRTALFSWAFARHHKGEFLLRIEDTDLARSTAESVNIILDGMKWVGLNYDNADNVVYQTRRFDRYKEVIAELLEKGHAYYCYCSKEELEAMREKAEKEGSATYDRRWRPEVGKTLPEIPSDVQPVVRFKTPLDGVTKWTDLVKGEISIPNEALDDLIIARADGTPTYNFCVVVDDYDMGVTHVIRGDDHVNNTPKQINILKAIDANLPEYGHLPMILNEQGKKISKRSGDTVAITDFGAMGILPEAMLNYLARLGWAHGDDEFFTMEQFIEWFDLKDVSPSPSRMDLKKLYWINGEHIKITPNGKLAELVKPRLALRDIHETEKPALEDVLELVKDRPQDLNTLADECFYFYVKQTPAEADVQKHWDDEAAARMLRFAERLEGLEDWNAEAIHDLFKPFCDEEGIKMGKLGMPLRLAVCGTAKTPSVDAVLALIGKEEVLKRIRA</sequence>
<name>SYE_NEIMB</name>
<comment type="function">
    <text evidence="1">Catalyzes the attachment of glutamate to tRNA(Glu) in a two-step reaction: glutamate is first activated by ATP to form Glu-AMP and then transferred to the acceptor end of tRNA(Glu).</text>
</comment>
<comment type="catalytic activity">
    <reaction evidence="1">
        <text>tRNA(Glu) + L-glutamate + ATP = L-glutamyl-tRNA(Glu) + AMP + diphosphate</text>
        <dbReference type="Rhea" id="RHEA:23540"/>
        <dbReference type="Rhea" id="RHEA-COMP:9663"/>
        <dbReference type="Rhea" id="RHEA-COMP:9680"/>
        <dbReference type="ChEBI" id="CHEBI:29985"/>
        <dbReference type="ChEBI" id="CHEBI:30616"/>
        <dbReference type="ChEBI" id="CHEBI:33019"/>
        <dbReference type="ChEBI" id="CHEBI:78442"/>
        <dbReference type="ChEBI" id="CHEBI:78520"/>
        <dbReference type="ChEBI" id="CHEBI:456215"/>
        <dbReference type="EC" id="6.1.1.17"/>
    </reaction>
</comment>
<comment type="subunit">
    <text evidence="1">Monomer.</text>
</comment>
<comment type="subcellular location">
    <subcellularLocation>
        <location evidence="1">Cytoplasm</location>
    </subcellularLocation>
</comment>
<comment type="similarity">
    <text evidence="1">Belongs to the class-I aminoacyl-tRNA synthetase family. Glutamate--tRNA ligase type 1 subfamily.</text>
</comment>
<proteinExistence type="inferred from homology"/>
<evidence type="ECO:0000255" key="1">
    <source>
        <dbReference type="HAMAP-Rule" id="MF_00022"/>
    </source>
</evidence>
<gene>
    <name evidence="1" type="primary">gltX</name>
    <name type="ordered locus">NMB0003</name>
</gene>
<feature type="chain" id="PRO_0000119613" description="Glutamate--tRNA ligase">
    <location>
        <begin position="1"/>
        <end position="464"/>
    </location>
</feature>
<feature type="short sequence motif" description="'HIGH' region" evidence="1">
    <location>
        <begin position="9"/>
        <end position="19"/>
    </location>
</feature>
<feature type="short sequence motif" description="'KMSKS' region" evidence="1">
    <location>
        <begin position="242"/>
        <end position="246"/>
    </location>
</feature>
<feature type="binding site" evidence="1">
    <location>
        <position position="245"/>
    </location>
    <ligand>
        <name>ATP</name>
        <dbReference type="ChEBI" id="CHEBI:30616"/>
    </ligand>
</feature>
<organism>
    <name type="scientific">Neisseria meningitidis serogroup B (strain ATCC BAA-335 / MC58)</name>
    <dbReference type="NCBI Taxonomy" id="122586"/>
    <lineage>
        <taxon>Bacteria</taxon>
        <taxon>Pseudomonadati</taxon>
        <taxon>Pseudomonadota</taxon>
        <taxon>Betaproteobacteria</taxon>
        <taxon>Neisseriales</taxon>
        <taxon>Neisseriaceae</taxon>
        <taxon>Neisseria</taxon>
    </lineage>
</organism>
<accession>Q9K1R6</accession>
<reference key="1">
    <citation type="journal article" date="2000" name="Science">
        <title>Complete genome sequence of Neisseria meningitidis serogroup B strain MC58.</title>
        <authorList>
            <person name="Tettelin H."/>
            <person name="Saunders N.J."/>
            <person name="Heidelberg J.F."/>
            <person name="Jeffries A.C."/>
            <person name="Nelson K.E."/>
            <person name="Eisen J.A."/>
            <person name="Ketchum K.A."/>
            <person name="Hood D.W."/>
            <person name="Peden J.F."/>
            <person name="Dodson R.J."/>
            <person name="Nelson W.C."/>
            <person name="Gwinn M.L."/>
            <person name="DeBoy R.T."/>
            <person name="Peterson J.D."/>
            <person name="Hickey E.K."/>
            <person name="Haft D.H."/>
            <person name="Salzberg S.L."/>
            <person name="White O."/>
            <person name="Fleischmann R.D."/>
            <person name="Dougherty B.A."/>
            <person name="Mason T.M."/>
            <person name="Ciecko A."/>
            <person name="Parksey D.S."/>
            <person name="Blair E."/>
            <person name="Cittone H."/>
            <person name="Clark E.B."/>
            <person name="Cotton M.D."/>
            <person name="Utterback T.R."/>
            <person name="Khouri H.M."/>
            <person name="Qin H."/>
            <person name="Vamathevan J.J."/>
            <person name="Gill J."/>
            <person name="Scarlato V."/>
            <person name="Masignani V."/>
            <person name="Pizza M."/>
            <person name="Grandi G."/>
            <person name="Sun L."/>
            <person name="Smith H.O."/>
            <person name="Fraser C.M."/>
            <person name="Moxon E.R."/>
            <person name="Rappuoli R."/>
            <person name="Venter J.C."/>
        </authorList>
    </citation>
    <scope>NUCLEOTIDE SEQUENCE [LARGE SCALE GENOMIC DNA]</scope>
    <source>
        <strain>ATCC BAA-335 / MC58</strain>
    </source>
</reference>
<dbReference type="EC" id="6.1.1.17" evidence="1"/>
<dbReference type="EMBL" id="AE002098">
    <property type="protein sequence ID" value="AAF40482.1"/>
    <property type="molecule type" value="Genomic_DNA"/>
</dbReference>
<dbReference type="PIR" id="A81247">
    <property type="entry name" value="A81247"/>
</dbReference>
<dbReference type="RefSeq" id="NP_273069.1">
    <property type="nucleotide sequence ID" value="NC_003112.2"/>
</dbReference>
<dbReference type="RefSeq" id="WP_002225749.1">
    <property type="nucleotide sequence ID" value="NC_003112.2"/>
</dbReference>
<dbReference type="SMR" id="Q9K1R6"/>
<dbReference type="STRING" id="122586.NMB0003"/>
<dbReference type="PaxDb" id="122586-NMB0003"/>
<dbReference type="KEGG" id="nme:NMB0003"/>
<dbReference type="PATRIC" id="fig|122586.8.peg.3"/>
<dbReference type="HOGENOM" id="CLU_015768_6_1_4"/>
<dbReference type="InParanoid" id="Q9K1R6"/>
<dbReference type="OrthoDB" id="9807503at2"/>
<dbReference type="Proteomes" id="UP000000425">
    <property type="component" value="Chromosome"/>
</dbReference>
<dbReference type="GO" id="GO:0005829">
    <property type="term" value="C:cytosol"/>
    <property type="evidence" value="ECO:0000318"/>
    <property type="project" value="GO_Central"/>
</dbReference>
<dbReference type="GO" id="GO:0005524">
    <property type="term" value="F:ATP binding"/>
    <property type="evidence" value="ECO:0007669"/>
    <property type="project" value="UniProtKB-UniRule"/>
</dbReference>
<dbReference type="GO" id="GO:0004818">
    <property type="term" value="F:glutamate-tRNA ligase activity"/>
    <property type="evidence" value="ECO:0000318"/>
    <property type="project" value="GO_Central"/>
</dbReference>
<dbReference type="GO" id="GO:0000049">
    <property type="term" value="F:tRNA binding"/>
    <property type="evidence" value="ECO:0007669"/>
    <property type="project" value="InterPro"/>
</dbReference>
<dbReference type="GO" id="GO:0008270">
    <property type="term" value="F:zinc ion binding"/>
    <property type="evidence" value="ECO:0007669"/>
    <property type="project" value="InterPro"/>
</dbReference>
<dbReference type="GO" id="GO:0006424">
    <property type="term" value="P:glutamyl-tRNA aminoacylation"/>
    <property type="evidence" value="ECO:0000318"/>
    <property type="project" value="GO_Central"/>
</dbReference>
<dbReference type="CDD" id="cd00808">
    <property type="entry name" value="GluRS_core"/>
    <property type="match status" value="1"/>
</dbReference>
<dbReference type="FunFam" id="3.40.50.620:FF:000007">
    <property type="entry name" value="Glutamate--tRNA ligase"/>
    <property type="match status" value="1"/>
</dbReference>
<dbReference type="Gene3D" id="1.10.10.350">
    <property type="match status" value="1"/>
</dbReference>
<dbReference type="Gene3D" id="3.40.50.620">
    <property type="entry name" value="HUPs"/>
    <property type="match status" value="1"/>
</dbReference>
<dbReference type="HAMAP" id="MF_00022">
    <property type="entry name" value="Glu_tRNA_synth_type1"/>
    <property type="match status" value="1"/>
</dbReference>
<dbReference type="InterPro" id="IPR045462">
    <property type="entry name" value="aa-tRNA-synth_I_cd-bd"/>
</dbReference>
<dbReference type="InterPro" id="IPR020751">
    <property type="entry name" value="aa-tRNA-synth_I_codon-bd_sub2"/>
</dbReference>
<dbReference type="InterPro" id="IPR001412">
    <property type="entry name" value="aa-tRNA-synth_I_CS"/>
</dbReference>
<dbReference type="InterPro" id="IPR008925">
    <property type="entry name" value="aa_tRNA-synth_I_cd-bd_sf"/>
</dbReference>
<dbReference type="InterPro" id="IPR004527">
    <property type="entry name" value="Glu-tRNA-ligase_bac/mito"/>
</dbReference>
<dbReference type="InterPro" id="IPR000924">
    <property type="entry name" value="Glu/Gln-tRNA-synth"/>
</dbReference>
<dbReference type="InterPro" id="IPR020058">
    <property type="entry name" value="Glu/Gln-tRNA-synth_Ib_cat-dom"/>
</dbReference>
<dbReference type="InterPro" id="IPR049940">
    <property type="entry name" value="GluQ/Sye"/>
</dbReference>
<dbReference type="InterPro" id="IPR033910">
    <property type="entry name" value="GluRS_core"/>
</dbReference>
<dbReference type="InterPro" id="IPR014729">
    <property type="entry name" value="Rossmann-like_a/b/a_fold"/>
</dbReference>
<dbReference type="NCBIfam" id="TIGR00464">
    <property type="entry name" value="gltX_bact"/>
    <property type="match status" value="1"/>
</dbReference>
<dbReference type="PANTHER" id="PTHR43311">
    <property type="entry name" value="GLUTAMATE--TRNA LIGASE"/>
    <property type="match status" value="1"/>
</dbReference>
<dbReference type="PANTHER" id="PTHR43311:SF2">
    <property type="entry name" value="GLUTAMATE--TRNA LIGASE, MITOCHONDRIAL-RELATED"/>
    <property type="match status" value="1"/>
</dbReference>
<dbReference type="Pfam" id="PF19269">
    <property type="entry name" value="Anticodon_2"/>
    <property type="match status" value="1"/>
</dbReference>
<dbReference type="Pfam" id="PF00749">
    <property type="entry name" value="tRNA-synt_1c"/>
    <property type="match status" value="1"/>
</dbReference>
<dbReference type="PRINTS" id="PR00987">
    <property type="entry name" value="TRNASYNTHGLU"/>
</dbReference>
<dbReference type="SUPFAM" id="SSF48163">
    <property type="entry name" value="An anticodon-binding domain of class I aminoacyl-tRNA synthetases"/>
    <property type="match status" value="1"/>
</dbReference>
<dbReference type="SUPFAM" id="SSF52374">
    <property type="entry name" value="Nucleotidylyl transferase"/>
    <property type="match status" value="1"/>
</dbReference>
<dbReference type="PROSITE" id="PS00178">
    <property type="entry name" value="AA_TRNA_LIGASE_I"/>
    <property type="match status" value="1"/>
</dbReference>